<evidence type="ECO:0000250" key="1">
    <source>
        <dbReference type="UniProtKB" id="P01942"/>
    </source>
</evidence>
<evidence type="ECO:0000250" key="2">
    <source>
        <dbReference type="UniProtKB" id="P01946"/>
    </source>
</evidence>
<evidence type="ECO:0000250" key="3">
    <source>
        <dbReference type="UniProtKB" id="P18969"/>
    </source>
</evidence>
<evidence type="ECO:0000250" key="4">
    <source>
        <dbReference type="UniProtKB" id="P69905"/>
    </source>
</evidence>
<evidence type="ECO:0000255" key="5">
    <source>
        <dbReference type="PROSITE-ProRule" id="PRU00238"/>
    </source>
</evidence>
<comment type="function">
    <text>Involved in oxygen transport from the lung to the various peripheral tissues.</text>
</comment>
<comment type="function">
    <molecule>Hemopressin</molecule>
    <text evidence="2">Hemopressin acts as an antagonist peptide of the cannabinoid receptor CNR1. Hemopressin-binding efficiently blocks cannabinoid receptor CNR1 and subsequent signaling.</text>
</comment>
<comment type="subunit">
    <text>Heterotetramer of two alpha chains and two beta chains.</text>
</comment>
<comment type="tissue specificity">
    <text>Red blood cells.</text>
</comment>
<comment type="similarity">
    <text evidence="5">Belongs to the globin family.</text>
</comment>
<organism>
    <name type="scientific">Balaenoptera acutorostrata</name>
    <name type="common">Common minke whale</name>
    <name type="synonym">Balaena rostrata</name>
    <dbReference type="NCBI Taxonomy" id="9767"/>
    <lineage>
        <taxon>Eukaryota</taxon>
        <taxon>Metazoa</taxon>
        <taxon>Chordata</taxon>
        <taxon>Craniata</taxon>
        <taxon>Vertebrata</taxon>
        <taxon>Euteleostomi</taxon>
        <taxon>Mammalia</taxon>
        <taxon>Eutheria</taxon>
        <taxon>Laurasiatheria</taxon>
        <taxon>Artiodactyla</taxon>
        <taxon>Whippomorpha</taxon>
        <taxon>Cetacea</taxon>
        <taxon>Mysticeti</taxon>
        <taxon>Balaenopteridae</taxon>
        <taxon>Balaenoptera</taxon>
    </lineage>
</organism>
<sequence length="142" mass="15538">MVLSPTDKSNVKATWAKIGNHGAEYGAEALERMFMNFPSTKTYFPHFDLGHDSAQVKGHGKKVADALTKAVGHMDNLLDALSDLSDLHAHKLRVDPANFKLLSHCLLVTLALHLPAEFTPSVHASLDKFLASVSTVLTSKYR</sequence>
<reference key="1">
    <citation type="journal article" date="1984" name="J. Chem. Soc. Pak.">
        <title>The primary structure of Minke-whale (Balenoptera acutorosterata - Cetacea) hemoglobin.</title>
        <authorList>
            <person name="Abbasi A."/>
            <person name="Rucknagel P."/>
            <person name="Matsuda G."/>
            <person name="Zaidi Z.H."/>
            <person name="Braunitzer G."/>
        </authorList>
    </citation>
    <scope>PROTEIN SEQUENCE OF 2-142</scope>
</reference>
<feature type="initiator methionine" description="Removed" evidence="3">
    <location>
        <position position="1"/>
    </location>
</feature>
<feature type="chain" id="PRO_0000052562" description="Hemoglobin subunit alpha">
    <location>
        <begin position="2"/>
        <end position="142"/>
    </location>
</feature>
<feature type="peptide" id="PRO_0000455840" description="Hemopressin" evidence="2">
    <location>
        <begin position="96"/>
        <end position="104"/>
    </location>
</feature>
<feature type="domain" description="Globin" evidence="5">
    <location>
        <begin position="2"/>
        <end position="142"/>
    </location>
</feature>
<feature type="binding site" evidence="5">
    <location>
        <position position="59"/>
    </location>
    <ligand>
        <name>O2</name>
        <dbReference type="ChEBI" id="CHEBI:15379"/>
    </ligand>
</feature>
<feature type="binding site" description="proximal binding residue" evidence="5">
    <location>
        <position position="88"/>
    </location>
    <ligand>
        <name>heme b</name>
        <dbReference type="ChEBI" id="CHEBI:60344"/>
    </ligand>
    <ligandPart>
        <name>Fe</name>
        <dbReference type="ChEBI" id="CHEBI:18248"/>
    </ligandPart>
</feature>
<feature type="modified residue" description="Phosphoserine" evidence="4">
    <location>
        <position position="4"/>
    </location>
</feature>
<feature type="modified residue" description="N6-succinyllysine" evidence="1">
    <location>
        <position position="8"/>
    </location>
</feature>
<feature type="modified residue" description="N6-succinyllysine" evidence="1">
    <location>
        <position position="12"/>
    </location>
</feature>
<feature type="modified residue" description="N6-acetyllysine; alternate" evidence="4">
    <location>
        <position position="17"/>
    </location>
</feature>
<feature type="modified residue" description="N6-succinyllysine; alternate" evidence="1">
    <location>
        <position position="17"/>
    </location>
</feature>
<feature type="modified residue" description="Phosphotyrosine" evidence="4">
    <location>
        <position position="25"/>
    </location>
</feature>
<feature type="modified residue" description="N6-succinyllysine" evidence="1">
    <location>
        <position position="41"/>
    </location>
</feature>
<feature type="modified residue" description="Phosphoserine" evidence="1">
    <location>
        <position position="103"/>
    </location>
</feature>
<feature type="modified residue" description="Phosphothreonine" evidence="1">
    <location>
        <position position="109"/>
    </location>
</feature>
<feature type="modified residue" description="Phosphoserine" evidence="1">
    <location>
        <position position="125"/>
    </location>
</feature>
<feature type="modified residue" description="Phosphoserine" evidence="1">
    <location>
        <position position="132"/>
    </location>
</feature>
<feature type="modified residue" description="Phosphothreonine" evidence="1">
    <location>
        <position position="135"/>
    </location>
</feature>
<feature type="modified residue" description="Phosphothreonine" evidence="1">
    <location>
        <position position="138"/>
    </location>
</feature>
<feature type="modified residue" description="Phosphoserine" evidence="1">
    <location>
        <position position="139"/>
    </location>
</feature>
<feature type="sequence variant">
    <original>G</original>
    <variation>S</variation>
    <location>
        <position position="22"/>
    </location>
</feature>
<feature type="sequence variant">
    <original>A</original>
    <variation>V</variation>
    <location>
        <position position="97"/>
    </location>
</feature>
<protein>
    <recommendedName>
        <fullName>Hemoglobin subunit alpha</fullName>
    </recommendedName>
    <alternativeName>
        <fullName>Alpha-globin</fullName>
    </alternativeName>
    <alternativeName>
        <fullName>Hemoglobin alpha chain</fullName>
    </alternativeName>
    <component>
        <recommendedName>
            <fullName evidence="2">Hemopressin</fullName>
        </recommendedName>
    </component>
</protein>
<accession>P18971</accession>
<dbReference type="PIR" id="S06520">
    <property type="entry name" value="HAWHK"/>
</dbReference>
<dbReference type="SMR" id="P18971"/>
<dbReference type="GO" id="GO:0072562">
    <property type="term" value="C:blood microparticle"/>
    <property type="evidence" value="ECO:0007669"/>
    <property type="project" value="TreeGrafter"/>
</dbReference>
<dbReference type="GO" id="GO:0031838">
    <property type="term" value="C:haptoglobin-hemoglobin complex"/>
    <property type="evidence" value="ECO:0007669"/>
    <property type="project" value="TreeGrafter"/>
</dbReference>
<dbReference type="GO" id="GO:0005833">
    <property type="term" value="C:hemoglobin complex"/>
    <property type="evidence" value="ECO:0007669"/>
    <property type="project" value="InterPro"/>
</dbReference>
<dbReference type="GO" id="GO:0031720">
    <property type="term" value="F:haptoglobin binding"/>
    <property type="evidence" value="ECO:0007669"/>
    <property type="project" value="TreeGrafter"/>
</dbReference>
<dbReference type="GO" id="GO:0020037">
    <property type="term" value="F:heme binding"/>
    <property type="evidence" value="ECO:0007669"/>
    <property type="project" value="InterPro"/>
</dbReference>
<dbReference type="GO" id="GO:0046872">
    <property type="term" value="F:metal ion binding"/>
    <property type="evidence" value="ECO:0007669"/>
    <property type="project" value="UniProtKB-KW"/>
</dbReference>
<dbReference type="GO" id="GO:0043177">
    <property type="term" value="F:organic acid binding"/>
    <property type="evidence" value="ECO:0007669"/>
    <property type="project" value="TreeGrafter"/>
</dbReference>
<dbReference type="GO" id="GO:0019825">
    <property type="term" value="F:oxygen binding"/>
    <property type="evidence" value="ECO:0007669"/>
    <property type="project" value="InterPro"/>
</dbReference>
<dbReference type="GO" id="GO:0005344">
    <property type="term" value="F:oxygen carrier activity"/>
    <property type="evidence" value="ECO:0007669"/>
    <property type="project" value="UniProtKB-KW"/>
</dbReference>
<dbReference type="GO" id="GO:0004601">
    <property type="term" value="F:peroxidase activity"/>
    <property type="evidence" value="ECO:0007669"/>
    <property type="project" value="TreeGrafter"/>
</dbReference>
<dbReference type="GO" id="GO:0042744">
    <property type="term" value="P:hydrogen peroxide catabolic process"/>
    <property type="evidence" value="ECO:0007669"/>
    <property type="project" value="TreeGrafter"/>
</dbReference>
<dbReference type="CDD" id="cd08927">
    <property type="entry name" value="Hb-alpha-like"/>
    <property type="match status" value="1"/>
</dbReference>
<dbReference type="FunFam" id="1.10.490.10:FF:000002">
    <property type="entry name" value="Hemoglobin subunit alpha"/>
    <property type="match status" value="1"/>
</dbReference>
<dbReference type="Gene3D" id="1.10.490.10">
    <property type="entry name" value="Globins"/>
    <property type="match status" value="1"/>
</dbReference>
<dbReference type="InterPro" id="IPR000971">
    <property type="entry name" value="Globin"/>
</dbReference>
<dbReference type="InterPro" id="IPR009050">
    <property type="entry name" value="Globin-like_sf"/>
</dbReference>
<dbReference type="InterPro" id="IPR012292">
    <property type="entry name" value="Globin/Proto"/>
</dbReference>
<dbReference type="InterPro" id="IPR002338">
    <property type="entry name" value="Hemoglobin_a-typ"/>
</dbReference>
<dbReference type="InterPro" id="IPR050056">
    <property type="entry name" value="Hemoglobin_oxygen_transport"/>
</dbReference>
<dbReference type="PANTHER" id="PTHR11442">
    <property type="entry name" value="HEMOGLOBIN FAMILY MEMBER"/>
    <property type="match status" value="1"/>
</dbReference>
<dbReference type="PANTHER" id="PTHR11442:SF48">
    <property type="entry name" value="HEMOGLOBIN SUBUNIT ALPHA"/>
    <property type="match status" value="1"/>
</dbReference>
<dbReference type="Pfam" id="PF00042">
    <property type="entry name" value="Globin"/>
    <property type="match status" value="1"/>
</dbReference>
<dbReference type="PRINTS" id="PR00612">
    <property type="entry name" value="ALPHAHAEM"/>
</dbReference>
<dbReference type="SUPFAM" id="SSF46458">
    <property type="entry name" value="Globin-like"/>
    <property type="match status" value="1"/>
</dbReference>
<dbReference type="PROSITE" id="PS01033">
    <property type="entry name" value="GLOBIN"/>
    <property type="match status" value="1"/>
</dbReference>
<name>HBA_BALAC</name>
<gene>
    <name type="primary">HBA</name>
</gene>
<keyword id="KW-0007">Acetylation</keyword>
<keyword id="KW-0903">Direct protein sequencing</keyword>
<keyword id="KW-0349">Heme</keyword>
<keyword id="KW-0408">Iron</keyword>
<keyword id="KW-0479">Metal-binding</keyword>
<keyword id="KW-0561">Oxygen transport</keyword>
<keyword id="KW-0597">Phosphoprotein</keyword>
<keyword id="KW-0813">Transport</keyword>
<proteinExistence type="evidence at protein level"/>